<protein>
    <recommendedName>
        <fullName evidence="1">Recombination-associated protein RdgC</fullName>
    </recommendedName>
</protein>
<organism>
    <name type="scientific">Shewanella frigidimarina (strain NCIMB 400)</name>
    <dbReference type="NCBI Taxonomy" id="318167"/>
    <lineage>
        <taxon>Bacteria</taxon>
        <taxon>Pseudomonadati</taxon>
        <taxon>Pseudomonadota</taxon>
        <taxon>Gammaproteobacteria</taxon>
        <taxon>Alteromonadales</taxon>
        <taxon>Shewanellaceae</taxon>
        <taxon>Shewanella</taxon>
    </lineage>
</organism>
<feature type="chain" id="PRO_1000021231" description="Recombination-associated protein RdgC">
    <location>
        <begin position="1"/>
        <end position="303"/>
    </location>
</feature>
<keyword id="KW-0963">Cytoplasm</keyword>
<keyword id="KW-0233">DNA recombination</keyword>
<keyword id="KW-1185">Reference proteome</keyword>
<proteinExistence type="inferred from homology"/>
<accession>Q07ZF4</accession>
<sequence length="303" mass="33656">MWFKNLTLYRFNKPFTTDTETLENALADFTFSPCSSQDISKFGFSNALGKKGQALVHSAENRHLLCVTKEEKILPGQVIKEALDEKVAEIEELENRKVTKKEKDTIKDEITTTLLPRAFSRRSQTHALIMPELEMILVDSSSATKAEELLALLRKALGSLPVIPLSYATPIESTLTQWLQAGEAPAPFEMQDEAELKSDSDEGGIVRFKQQVLQEDEVLAHIATGKQVHKLALHFGQSIAFLMQSDASIKRLKFSEEFRAGNDEVGTEDPLARLDADFALMGSELVAFVNAVNQAFGPLEQSV</sequence>
<evidence type="ECO:0000255" key="1">
    <source>
        <dbReference type="HAMAP-Rule" id="MF_00194"/>
    </source>
</evidence>
<name>RDGC_SHEFN</name>
<reference key="1">
    <citation type="submission" date="2006-08" db="EMBL/GenBank/DDBJ databases">
        <title>Complete sequence of Shewanella frigidimarina NCIMB 400.</title>
        <authorList>
            <consortium name="US DOE Joint Genome Institute"/>
            <person name="Copeland A."/>
            <person name="Lucas S."/>
            <person name="Lapidus A."/>
            <person name="Barry K."/>
            <person name="Detter J.C."/>
            <person name="Glavina del Rio T."/>
            <person name="Hammon N."/>
            <person name="Israni S."/>
            <person name="Dalin E."/>
            <person name="Tice H."/>
            <person name="Pitluck S."/>
            <person name="Fredrickson J.K."/>
            <person name="Kolker E."/>
            <person name="McCuel L.A."/>
            <person name="DiChristina T."/>
            <person name="Nealson K.H."/>
            <person name="Newman D."/>
            <person name="Tiedje J.M."/>
            <person name="Zhou J."/>
            <person name="Romine M.F."/>
            <person name="Culley D.E."/>
            <person name="Serres M."/>
            <person name="Chertkov O."/>
            <person name="Brettin T."/>
            <person name="Bruce D."/>
            <person name="Han C."/>
            <person name="Tapia R."/>
            <person name="Gilna P."/>
            <person name="Schmutz J."/>
            <person name="Larimer F."/>
            <person name="Land M."/>
            <person name="Hauser L."/>
            <person name="Kyrpides N."/>
            <person name="Mikhailova N."/>
            <person name="Richardson P."/>
        </authorList>
    </citation>
    <scope>NUCLEOTIDE SEQUENCE [LARGE SCALE GENOMIC DNA]</scope>
    <source>
        <strain>NCIMB 400</strain>
    </source>
</reference>
<comment type="function">
    <text evidence="1">May be involved in recombination.</text>
</comment>
<comment type="subcellular location">
    <subcellularLocation>
        <location evidence="1">Cytoplasm</location>
        <location evidence="1">Nucleoid</location>
    </subcellularLocation>
</comment>
<comment type="similarity">
    <text evidence="1">Belongs to the RdgC family.</text>
</comment>
<gene>
    <name evidence="1" type="primary">rdgC</name>
    <name type="ordered locus">Sfri_2770</name>
</gene>
<dbReference type="EMBL" id="CP000447">
    <property type="protein sequence ID" value="ABI72610.1"/>
    <property type="molecule type" value="Genomic_DNA"/>
</dbReference>
<dbReference type="RefSeq" id="WP_011638219.1">
    <property type="nucleotide sequence ID" value="NC_008345.1"/>
</dbReference>
<dbReference type="SMR" id="Q07ZF4"/>
<dbReference type="STRING" id="318167.Sfri_2770"/>
<dbReference type="KEGG" id="sfr:Sfri_2770"/>
<dbReference type="eggNOG" id="COG2974">
    <property type="taxonomic scope" value="Bacteria"/>
</dbReference>
<dbReference type="HOGENOM" id="CLU_052038_1_1_6"/>
<dbReference type="OrthoDB" id="5290530at2"/>
<dbReference type="Proteomes" id="UP000000684">
    <property type="component" value="Chromosome"/>
</dbReference>
<dbReference type="GO" id="GO:0043590">
    <property type="term" value="C:bacterial nucleoid"/>
    <property type="evidence" value="ECO:0007669"/>
    <property type="project" value="TreeGrafter"/>
</dbReference>
<dbReference type="GO" id="GO:0005737">
    <property type="term" value="C:cytoplasm"/>
    <property type="evidence" value="ECO:0007669"/>
    <property type="project" value="UniProtKB-UniRule"/>
</dbReference>
<dbReference type="GO" id="GO:0003690">
    <property type="term" value="F:double-stranded DNA binding"/>
    <property type="evidence" value="ECO:0007669"/>
    <property type="project" value="TreeGrafter"/>
</dbReference>
<dbReference type="GO" id="GO:0006310">
    <property type="term" value="P:DNA recombination"/>
    <property type="evidence" value="ECO:0007669"/>
    <property type="project" value="UniProtKB-UniRule"/>
</dbReference>
<dbReference type="GO" id="GO:0000018">
    <property type="term" value="P:regulation of DNA recombination"/>
    <property type="evidence" value="ECO:0007669"/>
    <property type="project" value="TreeGrafter"/>
</dbReference>
<dbReference type="HAMAP" id="MF_00194">
    <property type="entry name" value="RdgC"/>
    <property type="match status" value="1"/>
</dbReference>
<dbReference type="InterPro" id="IPR007476">
    <property type="entry name" value="RdgC"/>
</dbReference>
<dbReference type="NCBIfam" id="NF001462">
    <property type="entry name" value="PRK00321.1-3"/>
    <property type="match status" value="1"/>
</dbReference>
<dbReference type="NCBIfam" id="NF001464">
    <property type="entry name" value="PRK00321.1-5"/>
    <property type="match status" value="1"/>
</dbReference>
<dbReference type="PANTHER" id="PTHR38103">
    <property type="entry name" value="RECOMBINATION-ASSOCIATED PROTEIN RDGC"/>
    <property type="match status" value="1"/>
</dbReference>
<dbReference type="PANTHER" id="PTHR38103:SF1">
    <property type="entry name" value="RECOMBINATION-ASSOCIATED PROTEIN RDGC"/>
    <property type="match status" value="1"/>
</dbReference>
<dbReference type="Pfam" id="PF04381">
    <property type="entry name" value="RdgC"/>
    <property type="match status" value="1"/>
</dbReference>